<proteinExistence type="inferred from homology"/>
<accession>Q8DGX5</accession>
<dbReference type="EC" id="6.3.5.3" evidence="1"/>
<dbReference type="EC" id="3.5.1.2" evidence="1"/>
<dbReference type="EMBL" id="BA000039">
    <property type="protein sequence ID" value="BAC09739.1"/>
    <property type="molecule type" value="Genomic_DNA"/>
</dbReference>
<dbReference type="RefSeq" id="NP_682977.1">
    <property type="nucleotide sequence ID" value="NC_004113.1"/>
</dbReference>
<dbReference type="RefSeq" id="WP_011058021.1">
    <property type="nucleotide sequence ID" value="NC_004113.1"/>
</dbReference>
<dbReference type="SMR" id="Q8DGX5"/>
<dbReference type="STRING" id="197221.gene:10748798"/>
<dbReference type="EnsemblBacteria" id="BAC09739">
    <property type="protein sequence ID" value="BAC09739"/>
    <property type="gene ID" value="BAC09739"/>
</dbReference>
<dbReference type="KEGG" id="tel:tlr2187"/>
<dbReference type="PATRIC" id="fig|197221.4.peg.2294"/>
<dbReference type="eggNOG" id="COG0047">
    <property type="taxonomic scope" value="Bacteria"/>
</dbReference>
<dbReference type="UniPathway" id="UPA00074">
    <property type="reaction ID" value="UER00128"/>
</dbReference>
<dbReference type="Proteomes" id="UP000000440">
    <property type="component" value="Chromosome"/>
</dbReference>
<dbReference type="GO" id="GO:0005737">
    <property type="term" value="C:cytoplasm"/>
    <property type="evidence" value="ECO:0007669"/>
    <property type="project" value="UniProtKB-SubCell"/>
</dbReference>
<dbReference type="GO" id="GO:0005524">
    <property type="term" value="F:ATP binding"/>
    <property type="evidence" value="ECO:0007669"/>
    <property type="project" value="UniProtKB-KW"/>
</dbReference>
<dbReference type="GO" id="GO:0004359">
    <property type="term" value="F:glutaminase activity"/>
    <property type="evidence" value="ECO:0007669"/>
    <property type="project" value="UniProtKB-EC"/>
</dbReference>
<dbReference type="GO" id="GO:0004642">
    <property type="term" value="F:phosphoribosylformylglycinamidine synthase activity"/>
    <property type="evidence" value="ECO:0007669"/>
    <property type="project" value="UniProtKB-UniRule"/>
</dbReference>
<dbReference type="GO" id="GO:0006189">
    <property type="term" value="P:'de novo' IMP biosynthetic process"/>
    <property type="evidence" value="ECO:0007669"/>
    <property type="project" value="UniProtKB-UniRule"/>
</dbReference>
<dbReference type="CDD" id="cd01740">
    <property type="entry name" value="GATase1_FGAR_AT"/>
    <property type="match status" value="1"/>
</dbReference>
<dbReference type="Gene3D" id="3.40.50.880">
    <property type="match status" value="1"/>
</dbReference>
<dbReference type="HAMAP" id="MF_00421">
    <property type="entry name" value="PurQ"/>
    <property type="match status" value="1"/>
</dbReference>
<dbReference type="InterPro" id="IPR029062">
    <property type="entry name" value="Class_I_gatase-like"/>
</dbReference>
<dbReference type="InterPro" id="IPR010075">
    <property type="entry name" value="PRibForGlyAmidine_synth_PurQ"/>
</dbReference>
<dbReference type="NCBIfam" id="TIGR01737">
    <property type="entry name" value="FGAM_synth_I"/>
    <property type="match status" value="1"/>
</dbReference>
<dbReference type="NCBIfam" id="NF002957">
    <property type="entry name" value="PRK03619.1"/>
    <property type="match status" value="1"/>
</dbReference>
<dbReference type="PANTHER" id="PTHR47552">
    <property type="entry name" value="PHOSPHORIBOSYLFORMYLGLYCINAMIDINE SYNTHASE SUBUNIT PURQ"/>
    <property type="match status" value="1"/>
</dbReference>
<dbReference type="PANTHER" id="PTHR47552:SF1">
    <property type="entry name" value="PHOSPHORIBOSYLFORMYLGLYCINAMIDINE SYNTHASE SUBUNIT PURQ"/>
    <property type="match status" value="1"/>
</dbReference>
<dbReference type="Pfam" id="PF13507">
    <property type="entry name" value="GATase_5"/>
    <property type="match status" value="1"/>
</dbReference>
<dbReference type="PIRSF" id="PIRSF001586">
    <property type="entry name" value="FGAM_synth_I"/>
    <property type="match status" value="1"/>
</dbReference>
<dbReference type="SMART" id="SM01211">
    <property type="entry name" value="GATase_5"/>
    <property type="match status" value="1"/>
</dbReference>
<dbReference type="SUPFAM" id="SSF52317">
    <property type="entry name" value="Class I glutamine amidotransferase-like"/>
    <property type="match status" value="1"/>
</dbReference>
<dbReference type="PROSITE" id="PS51273">
    <property type="entry name" value="GATASE_TYPE_1"/>
    <property type="match status" value="1"/>
</dbReference>
<name>PURQ_THEVB</name>
<feature type="chain" id="PRO_0000100594" description="Phosphoribosylformylglycinamidine synthase subunit PurQ">
    <location>
        <begin position="1"/>
        <end position="241"/>
    </location>
</feature>
<feature type="domain" description="Glutamine amidotransferase type-1" evidence="1">
    <location>
        <begin position="6"/>
        <end position="241"/>
    </location>
</feature>
<feature type="active site" description="Nucleophile" evidence="1">
    <location>
        <position position="90"/>
    </location>
</feature>
<feature type="active site" evidence="1">
    <location>
        <position position="207"/>
    </location>
</feature>
<feature type="active site" evidence="1">
    <location>
        <position position="209"/>
    </location>
</feature>
<gene>
    <name evidence="1" type="primary">purQ</name>
    <name type="ordered locus">tlr2187</name>
</gene>
<sequence>MSEGLNVGIVVFPGSNCDRDVAYVTREILQWPTQLLWHEETDLGDYDLIVLPGGFSFGDYLRCGAIARFSPIMAAVKDHAAAGKWVLGICNGFQILTEAKLLPGALVRNRDLHFICDRVHLRLEAKERPWLRAYGDKTVIRLPIAHGEGCYYADATTLAELEANRQVLFRYADAQGNVTPESNPNGSLNNIAGICNAAGNVLGMMPHPERAADPALSHSPSEHTLDGLQLFQSLLLASAFA</sequence>
<reference key="1">
    <citation type="journal article" date="2002" name="DNA Res.">
        <title>Complete genome structure of the thermophilic cyanobacterium Thermosynechococcus elongatus BP-1.</title>
        <authorList>
            <person name="Nakamura Y."/>
            <person name="Kaneko T."/>
            <person name="Sato S."/>
            <person name="Ikeuchi M."/>
            <person name="Katoh H."/>
            <person name="Sasamoto S."/>
            <person name="Watanabe A."/>
            <person name="Iriguchi M."/>
            <person name="Kawashima K."/>
            <person name="Kimura T."/>
            <person name="Kishida Y."/>
            <person name="Kiyokawa C."/>
            <person name="Kohara M."/>
            <person name="Matsumoto M."/>
            <person name="Matsuno A."/>
            <person name="Nakazaki N."/>
            <person name="Shimpo S."/>
            <person name="Sugimoto M."/>
            <person name="Takeuchi C."/>
            <person name="Yamada M."/>
            <person name="Tabata S."/>
        </authorList>
    </citation>
    <scope>NUCLEOTIDE SEQUENCE [LARGE SCALE GENOMIC DNA]</scope>
    <source>
        <strain>NIES-2133 / IAM M-273 / BP-1</strain>
    </source>
</reference>
<organism>
    <name type="scientific">Thermosynechococcus vestitus (strain NIES-2133 / IAM M-273 / BP-1)</name>
    <dbReference type="NCBI Taxonomy" id="197221"/>
    <lineage>
        <taxon>Bacteria</taxon>
        <taxon>Bacillati</taxon>
        <taxon>Cyanobacteriota</taxon>
        <taxon>Cyanophyceae</taxon>
        <taxon>Acaryochloridales</taxon>
        <taxon>Thermosynechococcaceae</taxon>
        <taxon>Thermosynechococcus</taxon>
    </lineage>
</organism>
<comment type="function">
    <text evidence="1">Part of the phosphoribosylformylglycinamidine synthase complex involved in the purines biosynthetic pathway. Catalyzes the ATP-dependent conversion of formylglycinamide ribonucleotide (FGAR) and glutamine to yield formylglycinamidine ribonucleotide (FGAM) and glutamate. The FGAM synthase complex is composed of three subunits. PurQ produces an ammonia molecule by converting glutamine to glutamate. PurL transfers the ammonia molecule to FGAR to form FGAM in an ATP-dependent manner. PurS interacts with PurQ and PurL and is thought to assist in the transfer of the ammonia molecule from PurQ to PurL.</text>
</comment>
<comment type="catalytic activity">
    <reaction evidence="1">
        <text>N(2)-formyl-N(1)-(5-phospho-beta-D-ribosyl)glycinamide + L-glutamine + ATP + H2O = 2-formamido-N(1)-(5-O-phospho-beta-D-ribosyl)acetamidine + L-glutamate + ADP + phosphate + H(+)</text>
        <dbReference type="Rhea" id="RHEA:17129"/>
        <dbReference type="ChEBI" id="CHEBI:15377"/>
        <dbReference type="ChEBI" id="CHEBI:15378"/>
        <dbReference type="ChEBI" id="CHEBI:29985"/>
        <dbReference type="ChEBI" id="CHEBI:30616"/>
        <dbReference type="ChEBI" id="CHEBI:43474"/>
        <dbReference type="ChEBI" id="CHEBI:58359"/>
        <dbReference type="ChEBI" id="CHEBI:147286"/>
        <dbReference type="ChEBI" id="CHEBI:147287"/>
        <dbReference type="ChEBI" id="CHEBI:456216"/>
        <dbReference type="EC" id="6.3.5.3"/>
    </reaction>
</comment>
<comment type="catalytic activity">
    <reaction evidence="1">
        <text>L-glutamine + H2O = L-glutamate + NH4(+)</text>
        <dbReference type="Rhea" id="RHEA:15889"/>
        <dbReference type="ChEBI" id="CHEBI:15377"/>
        <dbReference type="ChEBI" id="CHEBI:28938"/>
        <dbReference type="ChEBI" id="CHEBI:29985"/>
        <dbReference type="ChEBI" id="CHEBI:58359"/>
        <dbReference type="EC" id="3.5.1.2"/>
    </reaction>
</comment>
<comment type="pathway">
    <text evidence="1">Purine metabolism; IMP biosynthesis via de novo pathway; 5-amino-1-(5-phospho-D-ribosyl)imidazole from N(2)-formyl-N(1)-(5-phospho-D-ribosyl)glycinamide: step 1/2.</text>
</comment>
<comment type="subunit">
    <text evidence="1">Part of the FGAM synthase complex composed of 1 PurL, 1 PurQ and 2 PurS subunits.</text>
</comment>
<comment type="subcellular location">
    <subcellularLocation>
        <location evidence="1">Cytoplasm</location>
    </subcellularLocation>
</comment>
<protein>
    <recommendedName>
        <fullName evidence="1">Phosphoribosylformylglycinamidine synthase subunit PurQ</fullName>
        <shortName evidence="1">FGAM synthase</shortName>
        <ecNumber evidence="1">6.3.5.3</ecNumber>
    </recommendedName>
    <alternativeName>
        <fullName evidence="1">Formylglycinamide ribonucleotide amidotransferase subunit I</fullName>
        <shortName evidence="1">FGAR amidotransferase I</shortName>
        <shortName evidence="1">FGAR-AT I</shortName>
    </alternativeName>
    <alternativeName>
        <fullName evidence="1">Glutaminase PurQ</fullName>
        <ecNumber evidence="1">3.5.1.2</ecNumber>
    </alternativeName>
    <alternativeName>
        <fullName evidence="1">Phosphoribosylformylglycinamidine synthase subunit I</fullName>
    </alternativeName>
</protein>
<evidence type="ECO:0000255" key="1">
    <source>
        <dbReference type="HAMAP-Rule" id="MF_00421"/>
    </source>
</evidence>
<keyword id="KW-0067">ATP-binding</keyword>
<keyword id="KW-0963">Cytoplasm</keyword>
<keyword id="KW-0315">Glutamine amidotransferase</keyword>
<keyword id="KW-0378">Hydrolase</keyword>
<keyword id="KW-0436">Ligase</keyword>
<keyword id="KW-0547">Nucleotide-binding</keyword>
<keyword id="KW-0658">Purine biosynthesis</keyword>
<keyword id="KW-1185">Reference proteome</keyword>